<sequence>MNTLQRRKTHQVLIDHITVGSEAPVVIQSMTNTDTADAKATALQIKELSDAGSEMVRITVNSPEAASKVAEIRRRLDDMGYATPLIGDFHFNGERLLAEFPECGKALSKYRINPGNVGKGVKGDEKFAFMIRTAAENDKAVRIGVNWGSLDQSLAKRMMDANLVSSAPKPPEEVMKEALIVSALESAEKAVLLGLPEDKIILSCKVSAVHDLIQVYRELGSRCVYPLHLGLTEAGMGSKGIVASTAALSVLLQEGIGDTIRISLTPEPGSPRTQEVVVGQEILQTMGLRSFTPMVTACPGCGRTTSTVFQELAQDVQNYLRQKMSIWRTLYPGVESLNVAVMGCVVNGPGESKLADIGISLPGTGETPVAPVYVDGERKVTLKGNNIASEFLAIVEEYVKTNYGKNSSKRNKGKVIPIQSL</sequence>
<reference key="1">
    <citation type="journal article" date="2008" name="J. Bacteriol.">
        <title>Complete genome sequence of Neisseria gonorrhoeae NCCP11945.</title>
        <authorList>
            <person name="Chung G.T."/>
            <person name="Yoo J.S."/>
            <person name="Oh H.B."/>
            <person name="Lee Y.S."/>
            <person name="Cha S.H."/>
            <person name="Kim S.J."/>
            <person name="Yoo C.K."/>
        </authorList>
    </citation>
    <scope>NUCLEOTIDE SEQUENCE [LARGE SCALE GENOMIC DNA]</scope>
    <source>
        <strain>NCCP11945</strain>
    </source>
</reference>
<comment type="function">
    <text evidence="1">Converts 2C-methyl-D-erythritol 2,4-cyclodiphosphate (ME-2,4cPP) into 1-hydroxy-2-methyl-2-(E)-butenyl 4-diphosphate.</text>
</comment>
<comment type="catalytic activity">
    <reaction evidence="1">
        <text>(2E)-4-hydroxy-3-methylbut-2-enyl diphosphate + oxidized [flavodoxin] + H2O + 2 H(+) = 2-C-methyl-D-erythritol 2,4-cyclic diphosphate + reduced [flavodoxin]</text>
        <dbReference type="Rhea" id="RHEA:43604"/>
        <dbReference type="Rhea" id="RHEA-COMP:10622"/>
        <dbReference type="Rhea" id="RHEA-COMP:10623"/>
        <dbReference type="ChEBI" id="CHEBI:15377"/>
        <dbReference type="ChEBI" id="CHEBI:15378"/>
        <dbReference type="ChEBI" id="CHEBI:57618"/>
        <dbReference type="ChEBI" id="CHEBI:58210"/>
        <dbReference type="ChEBI" id="CHEBI:58483"/>
        <dbReference type="ChEBI" id="CHEBI:128753"/>
        <dbReference type="EC" id="1.17.7.3"/>
    </reaction>
</comment>
<comment type="cofactor">
    <cofactor evidence="1">
        <name>[4Fe-4S] cluster</name>
        <dbReference type="ChEBI" id="CHEBI:49883"/>
    </cofactor>
    <text evidence="1">Binds 1 [4Fe-4S] cluster.</text>
</comment>
<comment type="pathway">
    <text evidence="1">Isoprenoid biosynthesis; isopentenyl diphosphate biosynthesis via DXP pathway; isopentenyl diphosphate from 1-deoxy-D-xylulose 5-phosphate: step 5/6.</text>
</comment>
<comment type="similarity">
    <text evidence="1">Belongs to the IspG family.</text>
</comment>
<feature type="chain" id="PRO_1000097169" description="4-hydroxy-3-methylbut-2-en-1-yl diphosphate synthase (flavodoxin)">
    <location>
        <begin position="1"/>
        <end position="421"/>
    </location>
</feature>
<feature type="binding site" evidence="1">
    <location>
        <position position="298"/>
    </location>
    <ligand>
        <name>[4Fe-4S] cluster</name>
        <dbReference type="ChEBI" id="CHEBI:49883"/>
    </ligand>
</feature>
<feature type="binding site" evidence="1">
    <location>
        <position position="301"/>
    </location>
    <ligand>
        <name>[4Fe-4S] cluster</name>
        <dbReference type="ChEBI" id="CHEBI:49883"/>
    </ligand>
</feature>
<feature type="binding site" evidence="1">
    <location>
        <position position="344"/>
    </location>
    <ligand>
        <name>[4Fe-4S] cluster</name>
        <dbReference type="ChEBI" id="CHEBI:49883"/>
    </ligand>
</feature>
<feature type="binding site" evidence="1">
    <location>
        <position position="351"/>
    </location>
    <ligand>
        <name>[4Fe-4S] cluster</name>
        <dbReference type="ChEBI" id="CHEBI:49883"/>
    </ligand>
</feature>
<keyword id="KW-0004">4Fe-4S</keyword>
<keyword id="KW-0408">Iron</keyword>
<keyword id="KW-0411">Iron-sulfur</keyword>
<keyword id="KW-0414">Isoprene biosynthesis</keyword>
<keyword id="KW-0479">Metal-binding</keyword>
<keyword id="KW-0560">Oxidoreductase</keyword>
<dbReference type="EC" id="1.17.7.3" evidence="1"/>
<dbReference type="EMBL" id="CP001050">
    <property type="protein sequence ID" value="ACF29999.1"/>
    <property type="molecule type" value="Genomic_DNA"/>
</dbReference>
<dbReference type="RefSeq" id="WP_003688953.1">
    <property type="nucleotide sequence ID" value="NC_011035.1"/>
</dbReference>
<dbReference type="SMR" id="B4RMG4"/>
<dbReference type="GeneID" id="66752933"/>
<dbReference type="KEGG" id="ngk:NGK_1324"/>
<dbReference type="HOGENOM" id="CLU_042258_1_0_4"/>
<dbReference type="UniPathway" id="UPA00056">
    <property type="reaction ID" value="UER00096"/>
</dbReference>
<dbReference type="Proteomes" id="UP000002564">
    <property type="component" value="Chromosome"/>
</dbReference>
<dbReference type="GO" id="GO:0051539">
    <property type="term" value="F:4 iron, 4 sulfur cluster binding"/>
    <property type="evidence" value="ECO:0007669"/>
    <property type="project" value="UniProtKB-UniRule"/>
</dbReference>
<dbReference type="GO" id="GO:0046429">
    <property type="term" value="F:4-hydroxy-3-methylbut-2-en-1-yl diphosphate synthase activity (ferredoxin)"/>
    <property type="evidence" value="ECO:0007669"/>
    <property type="project" value="UniProtKB-UniRule"/>
</dbReference>
<dbReference type="GO" id="GO:0141197">
    <property type="term" value="F:4-hydroxy-3-methylbut-2-enyl-diphosphate synthase activity (flavodoxin)"/>
    <property type="evidence" value="ECO:0007669"/>
    <property type="project" value="UniProtKB-EC"/>
</dbReference>
<dbReference type="GO" id="GO:0005506">
    <property type="term" value="F:iron ion binding"/>
    <property type="evidence" value="ECO:0007669"/>
    <property type="project" value="InterPro"/>
</dbReference>
<dbReference type="GO" id="GO:0019288">
    <property type="term" value="P:isopentenyl diphosphate biosynthetic process, methylerythritol 4-phosphate pathway"/>
    <property type="evidence" value="ECO:0007669"/>
    <property type="project" value="UniProtKB-UniRule"/>
</dbReference>
<dbReference type="GO" id="GO:0016114">
    <property type="term" value="P:terpenoid biosynthetic process"/>
    <property type="evidence" value="ECO:0007669"/>
    <property type="project" value="InterPro"/>
</dbReference>
<dbReference type="FunFam" id="3.20.20.20:FF:000001">
    <property type="entry name" value="4-hydroxy-3-methylbut-2-en-1-yl diphosphate synthase (flavodoxin)"/>
    <property type="match status" value="1"/>
</dbReference>
<dbReference type="FunFam" id="3.30.413.10:FF:000012">
    <property type="entry name" value="4-hydroxy-3-methylbut-2-en-1-yl diphosphate synthase (flavodoxin)"/>
    <property type="match status" value="1"/>
</dbReference>
<dbReference type="Gene3D" id="3.20.20.20">
    <property type="entry name" value="Dihydropteroate synthase-like"/>
    <property type="match status" value="1"/>
</dbReference>
<dbReference type="Gene3D" id="3.30.413.10">
    <property type="entry name" value="Sulfite Reductase Hemoprotein, domain 1"/>
    <property type="match status" value="1"/>
</dbReference>
<dbReference type="HAMAP" id="MF_00159">
    <property type="entry name" value="IspG"/>
    <property type="match status" value="1"/>
</dbReference>
<dbReference type="InterPro" id="IPR011005">
    <property type="entry name" value="Dihydropteroate_synth-like_sf"/>
</dbReference>
<dbReference type="InterPro" id="IPR016425">
    <property type="entry name" value="IspG_bac"/>
</dbReference>
<dbReference type="InterPro" id="IPR004588">
    <property type="entry name" value="IspG_bac-typ"/>
</dbReference>
<dbReference type="InterPro" id="IPR045854">
    <property type="entry name" value="NO2/SO3_Rdtase_4Fe4S_sf"/>
</dbReference>
<dbReference type="NCBIfam" id="TIGR00612">
    <property type="entry name" value="ispG_gcpE"/>
    <property type="match status" value="1"/>
</dbReference>
<dbReference type="NCBIfam" id="NF001540">
    <property type="entry name" value="PRK00366.1"/>
    <property type="match status" value="1"/>
</dbReference>
<dbReference type="PANTHER" id="PTHR30454">
    <property type="entry name" value="4-HYDROXY-3-METHYLBUT-2-EN-1-YL DIPHOSPHATE SYNTHASE"/>
    <property type="match status" value="1"/>
</dbReference>
<dbReference type="PANTHER" id="PTHR30454:SF0">
    <property type="entry name" value="4-HYDROXY-3-METHYLBUT-2-EN-1-YL DIPHOSPHATE SYNTHASE (FERREDOXIN), CHLOROPLASTIC"/>
    <property type="match status" value="1"/>
</dbReference>
<dbReference type="Pfam" id="PF04551">
    <property type="entry name" value="GcpE"/>
    <property type="match status" value="1"/>
</dbReference>
<dbReference type="PIRSF" id="PIRSF004640">
    <property type="entry name" value="IspG"/>
    <property type="match status" value="1"/>
</dbReference>
<dbReference type="SUPFAM" id="SSF56014">
    <property type="entry name" value="Nitrite and sulphite reductase 4Fe-4S domain-like"/>
    <property type="match status" value="1"/>
</dbReference>
<proteinExistence type="inferred from homology"/>
<accession>B4RMG4</accession>
<evidence type="ECO:0000255" key="1">
    <source>
        <dbReference type="HAMAP-Rule" id="MF_00159"/>
    </source>
</evidence>
<organism>
    <name type="scientific">Neisseria gonorrhoeae (strain NCCP11945)</name>
    <dbReference type="NCBI Taxonomy" id="521006"/>
    <lineage>
        <taxon>Bacteria</taxon>
        <taxon>Pseudomonadati</taxon>
        <taxon>Pseudomonadota</taxon>
        <taxon>Betaproteobacteria</taxon>
        <taxon>Neisseriales</taxon>
        <taxon>Neisseriaceae</taxon>
        <taxon>Neisseria</taxon>
    </lineage>
</organism>
<protein>
    <recommendedName>
        <fullName evidence="1">4-hydroxy-3-methylbut-2-en-1-yl diphosphate synthase (flavodoxin)</fullName>
        <ecNumber evidence="1">1.17.7.3</ecNumber>
    </recommendedName>
    <alternativeName>
        <fullName evidence="1">1-hydroxy-2-methyl-2-(E)-butenyl 4-diphosphate synthase</fullName>
    </alternativeName>
</protein>
<gene>
    <name evidence="1" type="primary">ispG</name>
    <name type="ordered locus">NGK_1324</name>
</gene>
<name>ISPG_NEIG2</name>